<keyword id="KW-1003">Cell membrane</keyword>
<keyword id="KW-0406">Ion transport</keyword>
<keyword id="KW-0472">Membrane</keyword>
<keyword id="KW-1185">Reference proteome</keyword>
<keyword id="KW-0812">Transmembrane</keyword>
<keyword id="KW-1133">Transmembrane helix</keyword>
<keyword id="KW-0813">Transport</keyword>
<evidence type="ECO:0000255" key="1"/>
<evidence type="ECO:0000305" key="2"/>
<reference key="1">
    <citation type="journal article" date="2002" name="Nature">
        <title>Genome sequence of the plant pathogen Ralstonia solanacearum.</title>
        <authorList>
            <person name="Salanoubat M."/>
            <person name="Genin S."/>
            <person name="Artiguenave F."/>
            <person name="Gouzy J."/>
            <person name="Mangenot S."/>
            <person name="Arlat M."/>
            <person name="Billault A."/>
            <person name="Brottier P."/>
            <person name="Camus J.-C."/>
            <person name="Cattolico L."/>
            <person name="Chandler M."/>
            <person name="Choisne N."/>
            <person name="Claudel-Renard C."/>
            <person name="Cunnac S."/>
            <person name="Demange N."/>
            <person name="Gaspin C."/>
            <person name="Lavie M."/>
            <person name="Moisan A."/>
            <person name="Robert C."/>
            <person name="Saurin W."/>
            <person name="Schiex T."/>
            <person name="Siguier P."/>
            <person name="Thebault P."/>
            <person name="Whalen M."/>
            <person name="Wincker P."/>
            <person name="Levy M."/>
            <person name="Weissenbach J."/>
            <person name="Boucher C.A."/>
        </authorList>
    </citation>
    <scope>NUCLEOTIDE SEQUENCE [LARGE SCALE GENOMIC DNA]</scope>
    <source>
        <strain>ATCC BAA-1114 / GMI1000</strain>
    </source>
</reference>
<feature type="chain" id="PRO_0000217669" description="Voltage-dependent anion channel-forming protein RSc3414">
    <location>
        <begin position="1"/>
        <end position="306"/>
    </location>
</feature>
<feature type="transmembrane region" description="Helical" evidence="1">
    <location>
        <begin position="28"/>
        <end position="48"/>
    </location>
</feature>
<feature type="transmembrane region" description="Helical" evidence="1">
    <location>
        <begin position="50"/>
        <end position="70"/>
    </location>
</feature>
<feature type="transmembrane region" description="Helical" evidence="1">
    <location>
        <begin position="213"/>
        <end position="233"/>
    </location>
</feature>
<feature type="transmembrane region" description="Helical" evidence="1">
    <location>
        <begin position="239"/>
        <end position="259"/>
    </location>
</feature>
<dbReference type="EMBL" id="AL646052">
    <property type="protein sequence ID" value="CAD16911.1"/>
    <property type="molecule type" value="Genomic_DNA"/>
</dbReference>
<dbReference type="RefSeq" id="WP_011003294.1">
    <property type="nucleotide sequence ID" value="NC_003295.1"/>
</dbReference>
<dbReference type="SMR" id="Q8XTY1"/>
<dbReference type="EnsemblBacteria" id="CAD16911">
    <property type="protein sequence ID" value="CAD16911"/>
    <property type="gene ID" value="RSc3414"/>
</dbReference>
<dbReference type="KEGG" id="rso:RSc3414"/>
<dbReference type="PATRIC" id="fig|267608.8.peg.3472"/>
<dbReference type="eggNOG" id="COG3781">
    <property type="taxonomic scope" value="Bacteria"/>
</dbReference>
<dbReference type="HOGENOM" id="CLU_029790_4_2_4"/>
<dbReference type="Proteomes" id="UP000001436">
    <property type="component" value="Chromosome"/>
</dbReference>
<dbReference type="GO" id="GO:0005886">
    <property type="term" value="C:plasma membrane"/>
    <property type="evidence" value="ECO:0007669"/>
    <property type="project" value="UniProtKB-SubCell"/>
</dbReference>
<dbReference type="GO" id="GO:0005254">
    <property type="term" value="F:chloride channel activity"/>
    <property type="evidence" value="ECO:0007669"/>
    <property type="project" value="InterPro"/>
</dbReference>
<dbReference type="InterPro" id="IPR021134">
    <property type="entry name" value="Bestrophin-like"/>
</dbReference>
<dbReference type="InterPro" id="IPR044669">
    <property type="entry name" value="YneE/VCCN1/2-like"/>
</dbReference>
<dbReference type="PANTHER" id="PTHR33281">
    <property type="entry name" value="UPF0187 PROTEIN YNEE"/>
    <property type="match status" value="1"/>
</dbReference>
<dbReference type="PANTHER" id="PTHR33281:SF19">
    <property type="entry name" value="VOLTAGE-DEPENDENT ANION CHANNEL-FORMING PROTEIN YNEE"/>
    <property type="match status" value="1"/>
</dbReference>
<dbReference type="Pfam" id="PF01062">
    <property type="entry name" value="Bestrophin"/>
    <property type="match status" value="1"/>
</dbReference>
<comment type="subcellular location">
    <subcellularLocation>
        <location evidence="1">Cell membrane</location>
        <topology evidence="1">Multi-pass membrane protein</topology>
    </subcellularLocation>
</comment>
<comment type="similarity">
    <text evidence="2">Belongs to the anion channel-forming bestrophin (TC 1.A.46) family.</text>
</comment>
<sequence>MVVRPHLHWFRMLLAWRGSVLPQLLPRLFLIFCISLVAMAVHVHWLPITVNLSTTPFSLIGIALAVFLGFRNNASYDRYWEARKLWGQLLNDARSMTRQALTLPRETLAAADVREFVQVLGALPHALRHQLRRTDPRDDLSARLPAPLFERVMASRYRPAALMLWLGEWVRQRSREGSLDAWAVLAFDRNLGSLSNVIGGCERIVSTPLPFAYSVMIHRTVYFFCAALPFGLVESIGNFTPVFSVFVAYAFMAHEAIAAQIEEPFGTEDNDLALNTMSLMIEDAVRDLIGEPSLGDEAAARAFILD</sequence>
<proteinExistence type="inferred from homology"/>
<gene>
    <name type="ordered locus">RSc3414</name>
    <name type="ORF">RS01793</name>
</gene>
<name>Y3414_RALN1</name>
<accession>Q8XTY1</accession>
<organism>
    <name type="scientific">Ralstonia nicotianae (strain ATCC BAA-1114 / GMI1000)</name>
    <name type="common">Ralstonia solanacearum</name>
    <dbReference type="NCBI Taxonomy" id="267608"/>
    <lineage>
        <taxon>Bacteria</taxon>
        <taxon>Pseudomonadati</taxon>
        <taxon>Pseudomonadota</taxon>
        <taxon>Betaproteobacteria</taxon>
        <taxon>Burkholderiales</taxon>
        <taxon>Burkholderiaceae</taxon>
        <taxon>Ralstonia</taxon>
        <taxon>Ralstonia solanacearum species complex</taxon>
    </lineage>
</organism>
<protein>
    <recommendedName>
        <fullName>Voltage-dependent anion channel-forming protein RSc3414</fullName>
    </recommendedName>
</protein>